<organism>
    <name type="scientific">Brucella abortus (strain S19)</name>
    <dbReference type="NCBI Taxonomy" id="430066"/>
    <lineage>
        <taxon>Bacteria</taxon>
        <taxon>Pseudomonadati</taxon>
        <taxon>Pseudomonadota</taxon>
        <taxon>Alphaproteobacteria</taxon>
        <taxon>Hyphomicrobiales</taxon>
        <taxon>Brucellaceae</taxon>
        <taxon>Brucella/Ochrobactrum group</taxon>
        <taxon>Brucella</taxon>
    </lineage>
</organism>
<name>SYH_BRUA1</name>
<gene>
    <name evidence="1" type="primary">hisS</name>
    <name type="ordered locus">BAbS19_II01720</name>
</gene>
<reference key="1">
    <citation type="journal article" date="2008" name="PLoS ONE">
        <title>Genome sequence of Brucella abortus vaccine strain S19 compared to virulent strains yields candidate virulence genes.</title>
        <authorList>
            <person name="Crasta O.R."/>
            <person name="Folkerts O."/>
            <person name="Fei Z."/>
            <person name="Mane S.P."/>
            <person name="Evans C."/>
            <person name="Martino-Catt S."/>
            <person name="Bricker B."/>
            <person name="Yu G."/>
            <person name="Du L."/>
            <person name="Sobral B.W."/>
        </authorList>
    </citation>
    <scope>NUCLEOTIDE SEQUENCE [LARGE SCALE GENOMIC DNA]</scope>
    <source>
        <strain>S19</strain>
    </source>
</reference>
<evidence type="ECO:0000255" key="1">
    <source>
        <dbReference type="HAMAP-Rule" id="MF_00127"/>
    </source>
</evidence>
<protein>
    <recommendedName>
        <fullName evidence="1">Histidine--tRNA ligase</fullName>
        <ecNumber evidence="1">6.1.1.21</ecNumber>
    </recommendedName>
    <alternativeName>
        <fullName evidence="1">Histidyl-tRNA synthetase</fullName>
        <shortName evidence="1">HisRS</shortName>
    </alternativeName>
</protein>
<accession>B2SCY7</accession>
<comment type="catalytic activity">
    <reaction evidence="1">
        <text>tRNA(His) + L-histidine + ATP = L-histidyl-tRNA(His) + AMP + diphosphate + H(+)</text>
        <dbReference type="Rhea" id="RHEA:17313"/>
        <dbReference type="Rhea" id="RHEA-COMP:9665"/>
        <dbReference type="Rhea" id="RHEA-COMP:9689"/>
        <dbReference type="ChEBI" id="CHEBI:15378"/>
        <dbReference type="ChEBI" id="CHEBI:30616"/>
        <dbReference type="ChEBI" id="CHEBI:33019"/>
        <dbReference type="ChEBI" id="CHEBI:57595"/>
        <dbReference type="ChEBI" id="CHEBI:78442"/>
        <dbReference type="ChEBI" id="CHEBI:78527"/>
        <dbReference type="ChEBI" id="CHEBI:456215"/>
        <dbReference type="EC" id="6.1.1.21"/>
    </reaction>
</comment>
<comment type="subunit">
    <text evidence="1">Homodimer.</text>
</comment>
<comment type="subcellular location">
    <subcellularLocation>
        <location evidence="1">Cytoplasm</location>
    </subcellularLocation>
</comment>
<comment type="similarity">
    <text evidence="1">Belongs to the class-II aminoacyl-tRNA synthetase family.</text>
</comment>
<keyword id="KW-0030">Aminoacyl-tRNA synthetase</keyword>
<keyword id="KW-0067">ATP-binding</keyword>
<keyword id="KW-0963">Cytoplasm</keyword>
<keyword id="KW-0436">Ligase</keyword>
<keyword id="KW-0547">Nucleotide-binding</keyword>
<keyword id="KW-0648">Protein biosynthesis</keyword>
<dbReference type="EC" id="6.1.1.21" evidence="1"/>
<dbReference type="EMBL" id="CP000888">
    <property type="protein sequence ID" value="ACD73691.1"/>
    <property type="molecule type" value="Genomic_DNA"/>
</dbReference>
<dbReference type="RefSeq" id="WP_002968826.1">
    <property type="nucleotide sequence ID" value="NC_010740.1"/>
</dbReference>
<dbReference type="SMR" id="B2SCY7"/>
<dbReference type="GeneID" id="93015856"/>
<dbReference type="KEGG" id="bmc:BAbS19_II01720"/>
<dbReference type="HOGENOM" id="CLU_025113_3_2_5"/>
<dbReference type="Proteomes" id="UP000002565">
    <property type="component" value="Chromosome 2"/>
</dbReference>
<dbReference type="GO" id="GO:0005737">
    <property type="term" value="C:cytoplasm"/>
    <property type="evidence" value="ECO:0007669"/>
    <property type="project" value="UniProtKB-SubCell"/>
</dbReference>
<dbReference type="GO" id="GO:0005524">
    <property type="term" value="F:ATP binding"/>
    <property type="evidence" value="ECO:0007669"/>
    <property type="project" value="UniProtKB-UniRule"/>
</dbReference>
<dbReference type="GO" id="GO:0004821">
    <property type="term" value="F:histidine-tRNA ligase activity"/>
    <property type="evidence" value="ECO:0007669"/>
    <property type="project" value="UniProtKB-UniRule"/>
</dbReference>
<dbReference type="GO" id="GO:0006427">
    <property type="term" value="P:histidyl-tRNA aminoacylation"/>
    <property type="evidence" value="ECO:0007669"/>
    <property type="project" value="UniProtKB-UniRule"/>
</dbReference>
<dbReference type="CDD" id="cd00773">
    <property type="entry name" value="HisRS-like_core"/>
    <property type="match status" value="1"/>
</dbReference>
<dbReference type="CDD" id="cd00859">
    <property type="entry name" value="HisRS_anticodon"/>
    <property type="match status" value="1"/>
</dbReference>
<dbReference type="Gene3D" id="3.40.50.800">
    <property type="entry name" value="Anticodon-binding domain"/>
    <property type="match status" value="1"/>
</dbReference>
<dbReference type="Gene3D" id="3.30.930.10">
    <property type="entry name" value="Bira Bifunctional Protein, Domain 2"/>
    <property type="match status" value="1"/>
</dbReference>
<dbReference type="HAMAP" id="MF_00127">
    <property type="entry name" value="His_tRNA_synth"/>
    <property type="match status" value="1"/>
</dbReference>
<dbReference type="InterPro" id="IPR006195">
    <property type="entry name" value="aa-tRNA-synth_II"/>
</dbReference>
<dbReference type="InterPro" id="IPR045864">
    <property type="entry name" value="aa-tRNA-synth_II/BPL/LPL"/>
</dbReference>
<dbReference type="InterPro" id="IPR004154">
    <property type="entry name" value="Anticodon-bd"/>
</dbReference>
<dbReference type="InterPro" id="IPR036621">
    <property type="entry name" value="Anticodon-bd_dom_sf"/>
</dbReference>
<dbReference type="InterPro" id="IPR015807">
    <property type="entry name" value="His-tRNA-ligase"/>
</dbReference>
<dbReference type="InterPro" id="IPR041715">
    <property type="entry name" value="HisRS-like_core"/>
</dbReference>
<dbReference type="InterPro" id="IPR004516">
    <property type="entry name" value="HisRS/HisZ"/>
</dbReference>
<dbReference type="InterPro" id="IPR033656">
    <property type="entry name" value="HisRS_anticodon"/>
</dbReference>
<dbReference type="NCBIfam" id="TIGR00442">
    <property type="entry name" value="hisS"/>
    <property type="match status" value="1"/>
</dbReference>
<dbReference type="PANTHER" id="PTHR11476:SF7">
    <property type="entry name" value="HISTIDINE--TRNA LIGASE"/>
    <property type="match status" value="1"/>
</dbReference>
<dbReference type="PANTHER" id="PTHR11476">
    <property type="entry name" value="HISTIDYL-TRNA SYNTHETASE"/>
    <property type="match status" value="1"/>
</dbReference>
<dbReference type="Pfam" id="PF03129">
    <property type="entry name" value="HGTP_anticodon"/>
    <property type="match status" value="1"/>
</dbReference>
<dbReference type="Pfam" id="PF13393">
    <property type="entry name" value="tRNA-synt_His"/>
    <property type="match status" value="1"/>
</dbReference>
<dbReference type="PIRSF" id="PIRSF001549">
    <property type="entry name" value="His-tRNA_synth"/>
    <property type="match status" value="1"/>
</dbReference>
<dbReference type="SUPFAM" id="SSF52954">
    <property type="entry name" value="Class II aaRS ABD-related"/>
    <property type="match status" value="1"/>
</dbReference>
<dbReference type="SUPFAM" id="SSF55681">
    <property type="entry name" value="Class II aaRS and biotin synthetases"/>
    <property type="match status" value="1"/>
</dbReference>
<dbReference type="PROSITE" id="PS50862">
    <property type="entry name" value="AA_TRNA_LIGASE_II"/>
    <property type="match status" value="1"/>
</dbReference>
<proteinExistence type="inferred from homology"/>
<sequence>MADKADKMKARLPRGFVDRVPDDLRAAEKMMATIREVYDLYGFEPVETPLVEYTDALGKFLPDQDRPNEGVFSFQDDDEQWLSLRYDLTAPLARYVAENFETLPKPYRSYRNGWVFRNEKPGPGRFRQFMQFDADTVGAPNVSADAEMCMMMADTLERLGIQRGDYAIRVNNRKVLDGVLDAIGLEGEGNAAKRLNVLRAIDKLDKFGPEGVRLLLGKGRLDESGDFTKGAQLPEAAIEKVLAFTAAGGADGAQTIANLQAVVAGNAKGEEGVQELADMQALFFAGGYEGRVKIDPSVVRGLEYYTGPVFEAELLFDVTNEDGQKVVFGSVGGGGRYDGLVSRFRGEPVPATGFSIGVSRLMTALKNLGKLDVSDTVGPVVVLVMDKDTQNLGRYQKMVSDLRKAGIRAEMYVGGSGMKAQMKYADRRAAPCVVIQGSQEREAGEVQIKDLVEGKRLSAEIEDNVTWLESRPAQITVREDGLVDAVREILDAQARDRAEQSK</sequence>
<feature type="chain" id="PRO_1000095529" description="Histidine--tRNA ligase">
    <location>
        <begin position="1"/>
        <end position="502"/>
    </location>
</feature>